<accession>Q2S6G3</accession>
<name>MURQ_SALRD</name>
<gene>
    <name evidence="1" type="primary">murQ</name>
    <name type="ordered locus">SRU_0065</name>
</gene>
<protein>
    <recommendedName>
        <fullName evidence="1">N-acetylmuramic acid 6-phosphate etherase</fullName>
        <shortName evidence="1">MurNAc-6-P etherase</shortName>
        <ecNumber evidence="1">4.2.1.126</ecNumber>
    </recommendedName>
    <alternativeName>
        <fullName evidence="1">N-acetylmuramic acid 6-phosphate hydrolase</fullName>
    </alternativeName>
    <alternativeName>
        <fullName evidence="1">N-acetylmuramic acid 6-phosphate lyase</fullName>
    </alternativeName>
</protein>
<keyword id="KW-0119">Carbohydrate metabolism</keyword>
<keyword id="KW-0456">Lyase</keyword>
<keyword id="KW-1185">Reference proteome</keyword>
<proteinExistence type="inferred from homology"/>
<reference key="1">
    <citation type="journal article" date="2005" name="Proc. Natl. Acad. Sci. U.S.A.">
        <title>The genome of Salinibacter ruber: convergence and gene exchange among hyperhalophilic bacteria and archaea.</title>
        <authorList>
            <person name="Mongodin E.F."/>
            <person name="Nelson K.E."/>
            <person name="Daugherty S."/>
            <person name="DeBoy R.T."/>
            <person name="Wister J."/>
            <person name="Khouri H."/>
            <person name="Weidman J."/>
            <person name="Walsh D.A."/>
            <person name="Papke R.T."/>
            <person name="Sanchez Perez G."/>
            <person name="Sharma A.K."/>
            <person name="Nesbo C.L."/>
            <person name="MacLeod D."/>
            <person name="Bapteste E."/>
            <person name="Doolittle W.F."/>
            <person name="Charlebois R.L."/>
            <person name="Legault B."/>
            <person name="Rodriguez-Valera F."/>
        </authorList>
    </citation>
    <scope>NUCLEOTIDE SEQUENCE [LARGE SCALE GENOMIC DNA]</scope>
    <source>
        <strain>DSM 13855 / CECT 5946 / M31</strain>
    </source>
</reference>
<organism>
    <name type="scientific">Salinibacter ruber (strain DSM 13855 / M31)</name>
    <dbReference type="NCBI Taxonomy" id="309807"/>
    <lineage>
        <taxon>Bacteria</taxon>
        <taxon>Pseudomonadati</taxon>
        <taxon>Rhodothermota</taxon>
        <taxon>Rhodothermia</taxon>
        <taxon>Rhodothermales</taxon>
        <taxon>Salinibacteraceae</taxon>
        <taxon>Salinibacter</taxon>
    </lineage>
</organism>
<evidence type="ECO:0000255" key="1">
    <source>
        <dbReference type="HAMAP-Rule" id="MF_00068"/>
    </source>
</evidence>
<dbReference type="EC" id="4.2.1.126" evidence="1"/>
<dbReference type="EMBL" id="CP000159">
    <property type="protein sequence ID" value="ABC45189.1"/>
    <property type="molecule type" value="Genomic_DNA"/>
</dbReference>
<dbReference type="RefSeq" id="YP_444218.1">
    <property type="nucleotide sequence ID" value="NC_007677.1"/>
</dbReference>
<dbReference type="SMR" id="Q2S6G3"/>
<dbReference type="STRING" id="309807.SRU_0065"/>
<dbReference type="EnsemblBacteria" id="ABC45189">
    <property type="protein sequence ID" value="ABC45189"/>
    <property type="gene ID" value="SRU_0065"/>
</dbReference>
<dbReference type="KEGG" id="sru:SRU_0065"/>
<dbReference type="PATRIC" id="fig|309807.25.peg.68"/>
<dbReference type="eggNOG" id="COG2103">
    <property type="taxonomic scope" value="Bacteria"/>
</dbReference>
<dbReference type="HOGENOM" id="CLU_049049_1_1_10"/>
<dbReference type="OrthoDB" id="9813395at2"/>
<dbReference type="UniPathway" id="UPA00342"/>
<dbReference type="Proteomes" id="UP000008674">
    <property type="component" value="Chromosome"/>
</dbReference>
<dbReference type="GO" id="GO:0097367">
    <property type="term" value="F:carbohydrate derivative binding"/>
    <property type="evidence" value="ECO:0007669"/>
    <property type="project" value="InterPro"/>
</dbReference>
<dbReference type="GO" id="GO:0016835">
    <property type="term" value="F:carbon-oxygen lyase activity"/>
    <property type="evidence" value="ECO:0007669"/>
    <property type="project" value="UniProtKB-UniRule"/>
</dbReference>
<dbReference type="GO" id="GO:0016803">
    <property type="term" value="F:ether hydrolase activity"/>
    <property type="evidence" value="ECO:0007669"/>
    <property type="project" value="TreeGrafter"/>
</dbReference>
<dbReference type="GO" id="GO:0046348">
    <property type="term" value="P:amino sugar catabolic process"/>
    <property type="evidence" value="ECO:0007669"/>
    <property type="project" value="InterPro"/>
</dbReference>
<dbReference type="GO" id="GO:0097173">
    <property type="term" value="P:N-acetylmuramic acid catabolic process"/>
    <property type="evidence" value="ECO:0007669"/>
    <property type="project" value="UniProtKB-UniPathway"/>
</dbReference>
<dbReference type="GO" id="GO:0009254">
    <property type="term" value="P:peptidoglycan turnover"/>
    <property type="evidence" value="ECO:0007669"/>
    <property type="project" value="TreeGrafter"/>
</dbReference>
<dbReference type="CDD" id="cd05007">
    <property type="entry name" value="SIS_Etherase"/>
    <property type="match status" value="1"/>
</dbReference>
<dbReference type="FunFam" id="1.10.8.1080:FF:000001">
    <property type="entry name" value="N-acetylmuramic acid 6-phosphate etherase"/>
    <property type="match status" value="1"/>
</dbReference>
<dbReference type="FunFam" id="3.40.50.10490:FF:000014">
    <property type="entry name" value="N-acetylmuramic acid 6-phosphate etherase"/>
    <property type="match status" value="1"/>
</dbReference>
<dbReference type="Gene3D" id="1.10.8.1080">
    <property type="match status" value="1"/>
</dbReference>
<dbReference type="Gene3D" id="3.40.50.10490">
    <property type="entry name" value="Glucose-6-phosphate isomerase like protein, domain 1"/>
    <property type="match status" value="1"/>
</dbReference>
<dbReference type="HAMAP" id="MF_00068">
    <property type="entry name" value="MurQ"/>
    <property type="match status" value="1"/>
</dbReference>
<dbReference type="InterPro" id="IPR005488">
    <property type="entry name" value="Etherase_MurQ"/>
</dbReference>
<dbReference type="InterPro" id="IPR005486">
    <property type="entry name" value="Glucokinase_regulatory_CS"/>
</dbReference>
<dbReference type="InterPro" id="IPR040190">
    <property type="entry name" value="MURQ/GCKR"/>
</dbReference>
<dbReference type="InterPro" id="IPR000408">
    <property type="entry name" value="Reg_chr_condens"/>
</dbReference>
<dbReference type="InterPro" id="IPR001347">
    <property type="entry name" value="SIS_dom"/>
</dbReference>
<dbReference type="InterPro" id="IPR046348">
    <property type="entry name" value="SIS_dom_sf"/>
</dbReference>
<dbReference type="NCBIfam" id="TIGR00274">
    <property type="entry name" value="N-acetylmuramic acid 6-phosphate etherase"/>
    <property type="match status" value="1"/>
</dbReference>
<dbReference type="NCBIfam" id="NF003915">
    <property type="entry name" value="PRK05441.1"/>
    <property type="match status" value="1"/>
</dbReference>
<dbReference type="NCBIfam" id="NF009222">
    <property type="entry name" value="PRK12570.1"/>
    <property type="match status" value="1"/>
</dbReference>
<dbReference type="PANTHER" id="PTHR10088">
    <property type="entry name" value="GLUCOKINASE REGULATORY PROTEIN"/>
    <property type="match status" value="1"/>
</dbReference>
<dbReference type="PANTHER" id="PTHR10088:SF4">
    <property type="entry name" value="GLUCOKINASE REGULATORY PROTEIN"/>
    <property type="match status" value="1"/>
</dbReference>
<dbReference type="Pfam" id="PF22645">
    <property type="entry name" value="GKRP_SIS_N"/>
    <property type="match status" value="1"/>
</dbReference>
<dbReference type="SUPFAM" id="SSF53697">
    <property type="entry name" value="SIS domain"/>
    <property type="match status" value="1"/>
</dbReference>
<dbReference type="PROSITE" id="PS01272">
    <property type="entry name" value="GCKR"/>
    <property type="match status" value="1"/>
</dbReference>
<dbReference type="PROSITE" id="PS51464">
    <property type="entry name" value="SIS"/>
    <property type="match status" value="1"/>
</dbReference>
<feature type="chain" id="PRO_0000249647" description="N-acetylmuramic acid 6-phosphate etherase">
    <location>
        <begin position="1"/>
        <end position="311"/>
    </location>
</feature>
<feature type="domain" description="SIS" evidence="1">
    <location>
        <begin position="66"/>
        <end position="230"/>
    </location>
</feature>
<feature type="active site" description="Proton donor" evidence="1">
    <location>
        <position position="94"/>
    </location>
</feature>
<feature type="active site" evidence="1">
    <location>
        <position position="125"/>
    </location>
</feature>
<comment type="function">
    <text evidence="1">Specifically catalyzes the cleavage of the D-lactyl ether substituent of MurNAc 6-phosphate, producing GlcNAc 6-phosphate and D-lactate.</text>
</comment>
<comment type="catalytic activity">
    <reaction evidence="1">
        <text>N-acetyl-D-muramate 6-phosphate + H2O = N-acetyl-D-glucosamine 6-phosphate + (R)-lactate</text>
        <dbReference type="Rhea" id="RHEA:26410"/>
        <dbReference type="ChEBI" id="CHEBI:15377"/>
        <dbReference type="ChEBI" id="CHEBI:16004"/>
        <dbReference type="ChEBI" id="CHEBI:57513"/>
        <dbReference type="ChEBI" id="CHEBI:58722"/>
        <dbReference type="EC" id="4.2.1.126"/>
    </reaction>
</comment>
<comment type="pathway">
    <text evidence="1">Amino-sugar metabolism; N-acetylmuramate degradation.</text>
</comment>
<comment type="subunit">
    <text evidence="1">Homodimer.</text>
</comment>
<comment type="miscellaneous">
    <text evidence="1">A lyase-type mechanism (elimination/hydration) is suggested for the cleavage of the lactyl ether bond of MurNAc 6-phosphate, with the formation of an alpha,beta-unsaturated aldehyde intermediate with (E)-stereochemistry, followed by the syn addition of water to give product.</text>
</comment>
<comment type="similarity">
    <text evidence="1">Belongs to the GCKR-like family. MurNAc-6-P etherase subfamily.</text>
</comment>
<sequence>MPRMPDSSSLFDELQDLATEQQNPHSTHIDTASVEEILRVINTEDHKVPIAVRRELPHIAEAVEIVVEAFEADGRLFYVGAGTSGRLGVVDASECPPTFGTDPERVQGIIAGGREAVFRSQEGAEDVPERGAQALKGQGVTENDVVCGIASSGRTPFVVGAVEHARDAIGCPTLFVTTIPREELDVDPDVAICPVVGPEVIMGSTRMKSGTAQKLVLNMITTAAMVRLGKVYENMMVDLRRTSEKLVERGIRTVMMVTGVDYDAADAVLTRCDGHVKTALVMILADVEVDEARRRLDATDGFVRPAIEGDE</sequence>